<gene>
    <name evidence="1" type="primary">aroD</name>
    <name type="ordered locus">Mboo_1570</name>
</gene>
<name>AROD_METB6</name>
<keyword id="KW-0028">Amino-acid biosynthesis</keyword>
<keyword id="KW-0057">Aromatic amino acid biosynthesis</keyword>
<keyword id="KW-0456">Lyase</keyword>
<keyword id="KW-1185">Reference proteome</keyword>
<keyword id="KW-0704">Schiff base</keyword>
<reference key="1">
    <citation type="journal article" date="2015" name="Microbiology">
        <title>Genome of Methanoregula boonei 6A8 reveals adaptations to oligotrophic peatland environments.</title>
        <authorList>
            <person name="Braeuer S."/>
            <person name="Cadillo-Quiroz H."/>
            <person name="Kyrpides N."/>
            <person name="Woyke T."/>
            <person name="Goodwin L."/>
            <person name="Detter C."/>
            <person name="Podell S."/>
            <person name="Yavitt J.B."/>
            <person name="Zinder S.H."/>
        </authorList>
    </citation>
    <scope>NUCLEOTIDE SEQUENCE [LARGE SCALE GENOMIC DNA]</scope>
    <source>
        <strain>DSM 21154 / JCM 14090 / 6A8</strain>
    </source>
</reference>
<protein>
    <recommendedName>
        <fullName evidence="1">3-dehydroquinate dehydratase</fullName>
        <shortName evidence="1">3-dehydroquinase</shortName>
        <ecNumber evidence="1">4.2.1.10</ecNumber>
    </recommendedName>
    <alternativeName>
        <fullName evidence="1">Type I DHQase</fullName>
    </alternativeName>
    <alternativeName>
        <fullName evidence="1">Type I dehydroquinase</fullName>
        <shortName evidence="1">DHQ1</shortName>
    </alternativeName>
</protein>
<feature type="chain" id="PRO_0000325537" description="3-dehydroquinate dehydratase">
    <location>
        <begin position="1"/>
        <end position="209"/>
    </location>
</feature>
<feature type="active site" description="Proton donor/acceptor" evidence="1">
    <location>
        <position position="109"/>
    </location>
</feature>
<feature type="active site" description="Schiff-base intermediate with substrate" evidence="1">
    <location>
        <position position="134"/>
    </location>
</feature>
<feature type="binding site" evidence="1">
    <location>
        <position position="6"/>
    </location>
    <ligand>
        <name>3-dehydroquinate</name>
        <dbReference type="ChEBI" id="CHEBI:32364"/>
    </ligand>
</feature>
<feature type="binding site" evidence="1">
    <location>
        <begin position="25"/>
        <end position="27"/>
    </location>
    <ligand>
        <name>3-dehydroquinate</name>
        <dbReference type="ChEBI" id="CHEBI:32364"/>
    </ligand>
</feature>
<feature type="binding site" evidence="1">
    <location>
        <position position="55"/>
    </location>
    <ligand>
        <name>3-dehydroquinate</name>
        <dbReference type="ChEBI" id="CHEBI:32364"/>
    </ligand>
</feature>
<feature type="binding site" evidence="1">
    <location>
        <position position="172"/>
    </location>
    <ligand>
        <name>3-dehydroquinate</name>
        <dbReference type="ChEBI" id="CHEBI:32364"/>
    </ligand>
</feature>
<feature type="binding site" evidence="1">
    <location>
        <position position="195"/>
    </location>
    <ligand>
        <name>3-dehydroquinate</name>
        <dbReference type="ChEBI" id="CHEBI:32364"/>
    </ligand>
</feature>
<dbReference type="EC" id="4.2.1.10" evidence="1"/>
<dbReference type="EMBL" id="CP000780">
    <property type="protein sequence ID" value="ABS56087.1"/>
    <property type="molecule type" value="Genomic_DNA"/>
</dbReference>
<dbReference type="RefSeq" id="WP_012107130.1">
    <property type="nucleotide sequence ID" value="NC_009712.1"/>
</dbReference>
<dbReference type="SMR" id="A7I8M6"/>
<dbReference type="STRING" id="456442.Mboo_1570"/>
<dbReference type="GeneID" id="5410095"/>
<dbReference type="KEGG" id="mbn:Mboo_1570"/>
<dbReference type="eggNOG" id="arCOG02097">
    <property type="taxonomic scope" value="Archaea"/>
</dbReference>
<dbReference type="HOGENOM" id="CLU_064444_2_0_2"/>
<dbReference type="OrthoDB" id="34329at2157"/>
<dbReference type="UniPathway" id="UPA00053">
    <property type="reaction ID" value="UER00086"/>
</dbReference>
<dbReference type="Proteomes" id="UP000002408">
    <property type="component" value="Chromosome"/>
</dbReference>
<dbReference type="GO" id="GO:0003855">
    <property type="term" value="F:3-dehydroquinate dehydratase activity"/>
    <property type="evidence" value="ECO:0007669"/>
    <property type="project" value="UniProtKB-UniRule"/>
</dbReference>
<dbReference type="GO" id="GO:0046279">
    <property type="term" value="P:3,4-dihydroxybenzoate biosynthetic process"/>
    <property type="evidence" value="ECO:0007669"/>
    <property type="project" value="TreeGrafter"/>
</dbReference>
<dbReference type="GO" id="GO:0008652">
    <property type="term" value="P:amino acid biosynthetic process"/>
    <property type="evidence" value="ECO:0007669"/>
    <property type="project" value="UniProtKB-KW"/>
</dbReference>
<dbReference type="GO" id="GO:0009073">
    <property type="term" value="P:aromatic amino acid family biosynthetic process"/>
    <property type="evidence" value="ECO:0007669"/>
    <property type="project" value="UniProtKB-KW"/>
</dbReference>
<dbReference type="GO" id="GO:0009423">
    <property type="term" value="P:chorismate biosynthetic process"/>
    <property type="evidence" value="ECO:0007669"/>
    <property type="project" value="UniProtKB-UniRule"/>
</dbReference>
<dbReference type="CDD" id="cd00502">
    <property type="entry name" value="DHQase_I"/>
    <property type="match status" value="1"/>
</dbReference>
<dbReference type="Gene3D" id="3.20.20.70">
    <property type="entry name" value="Aldolase class I"/>
    <property type="match status" value="1"/>
</dbReference>
<dbReference type="HAMAP" id="MF_00214">
    <property type="entry name" value="AroD"/>
    <property type="match status" value="1"/>
</dbReference>
<dbReference type="InterPro" id="IPR013785">
    <property type="entry name" value="Aldolase_TIM"/>
</dbReference>
<dbReference type="InterPro" id="IPR001381">
    <property type="entry name" value="DHquinase_I"/>
</dbReference>
<dbReference type="InterPro" id="IPR050146">
    <property type="entry name" value="Type-I_3-dehydroquinase"/>
</dbReference>
<dbReference type="PANTHER" id="PTHR43699">
    <property type="entry name" value="3-DEHYDROQUINATE DEHYDRATASE"/>
    <property type="match status" value="1"/>
</dbReference>
<dbReference type="PANTHER" id="PTHR43699:SF1">
    <property type="entry name" value="3-DEHYDROQUINATE DEHYDRATASE"/>
    <property type="match status" value="1"/>
</dbReference>
<dbReference type="Pfam" id="PF01487">
    <property type="entry name" value="DHquinase_I"/>
    <property type="match status" value="1"/>
</dbReference>
<dbReference type="SUPFAM" id="SSF51569">
    <property type="entry name" value="Aldolase"/>
    <property type="match status" value="1"/>
</dbReference>
<sequence length="209" mass="22841">MQIVASLTDPSQAATAQSQGADLLELRFDLMEGDPVDIARRCRAISKLPLIATFRSALEGGRYFGSPEEWAKKIAPVLPLVDYVDIEQQFARKSGLVREAGKAIIASHHTAEMLPLHVLFVLEQELRAYGDIPKIIVTPHNEDELIDLIAFTRAAKKPVCTGVMGSAFRYARAILPLFGSELAYCHAGVPAAEGQYSVAEFVALMKMLS</sequence>
<comment type="function">
    <text evidence="1">Involved in the third step of the chorismate pathway, which leads to the biosynthesis of aromatic amino acids. Catalyzes the cis-dehydration of 3-dehydroquinate (DHQ) and introduces the first double bond of the aromatic ring to yield 3-dehydroshikimate.</text>
</comment>
<comment type="catalytic activity">
    <reaction evidence="1">
        <text>3-dehydroquinate = 3-dehydroshikimate + H2O</text>
        <dbReference type="Rhea" id="RHEA:21096"/>
        <dbReference type="ChEBI" id="CHEBI:15377"/>
        <dbReference type="ChEBI" id="CHEBI:16630"/>
        <dbReference type="ChEBI" id="CHEBI:32364"/>
        <dbReference type="EC" id="4.2.1.10"/>
    </reaction>
</comment>
<comment type="pathway">
    <text evidence="1">Metabolic intermediate biosynthesis; chorismate biosynthesis; chorismate from D-erythrose 4-phosphate and phosphoenolpyruvate: step 3/7.</text>
</comment>
<comment type="subunit">
    <text evidence="1">Homodimer.</text>
</comment>
<comment type="similarity">
    <text evidence="1">Belongs to the type-I 3-dehydroquinase family.</text>
</comment>
<organism>
    <name type="scientific">Methanoregula boonei (strain DSM 21154 / JCM 14090 / 6A8)</name>
    <dbReference type="NCBI Taxonomy" id="456442"/>
    <lineage>
        <taxon>Archaea</taxon>
        <taxon>Methanobacteriati</taxon>
        <taxon>Methanobacteriota</taxon>
        <taxon>Stenosarchaea group</taxon>
        <taxon>Methanomicrobia</taxon>
        <taxon>Methanomicrobiales</taxon>
        <taxon>Methanoregulaceae</taxon>
        <taxon>Methanoregula</taxon>
    </lineage>
</organism>
<accession>A7I8M6</accession>
<evidence type="ECO:0000255" key="1">
    <source>
        <dbReference type="HAMAP-Rule" id="MF_00214"/>
    </source>
</evidence>
<proteinExistence type="inferred from homology"/>